<keyword id="KW-0050">Antiport</keyword>
<keyword id="KW-0997">Cell inner membrane</keyword>
<keyword id="KW-1003">Cell membrane</keyword>
<keyword id="KW-0472">Membrane</keyword>
<keyword id="KW-1185">Reference proteome</keyword>
<keyword id="KW-0812">Transmembrane</keyword>
<keyword id="KW-1133">Transmembrane helix</keyword>
<keyword id="KW-0813">Transport</keyword>
<comment type="function">
    <text evidence="1">Responsible for the transport of C4-dicarboxylates during aerobic and anaerobic growth. Required for the uptake of L-aspartate as a nitrogen source during aerobic growth. The uptake of L-aspartate in aerobic conditions is coupled to the excretion of fumarate, resulting in the net uptake of nitrogen without carbon uptake. In addition, during anaerobic growth, catalyzes the uptake of fumarate, malate or aspartate coupled to the export of succinate. May play a a general role in anaerobic C4-dicarboxylate transport.</text>
</comment>
<comment type="catalytic activity">
    <reaction evidence="1">
        <text>fumarate(in) + L-aspartate(out) = fumarate(out) + L-aspartate(in)</text>
        <dbReference type="Rhea" id="RHEA:72459"/>
        <dbReference type="ChEBI" id="CHEBI:29806"/>
        <dbReference type="ChEBI" id="CHEBI:29991"/>
    </reaction>
    <physiologicalReaction direction="left-to-right" evidence="1">
        <dbReference type="Rhea" id="RHEA:72460"/>
    </physiologicalReaction>
</comment>
<comment type="catalytic activity">
    <reaction evidence="1">
        <text>fumarate(in) + succinate(out) = fumarate(out) + succinate(in)</text>
        <dbReference type="Rhea" id="RHEA:29323"/>
        <dbReference type="ChEBI" id="CHEBI:29806"/>
        <dbReference type="ChEBI" id="CHEBI:30031"/>
    </reaction>
    <physiologicalReaction direction="right-to-left" evidence="1">
        <dbReference type="Rhea" id="RHEA:29325"/>
    </physiologicalReaction>
</comment>
<comment type="catalytic activity">
    <reaction evidence="1">
        <text>(S)-malate(in) + succinate(out) = (S)-malate(out) + succinate(in)</text>
        <dbReference type="Rhea" id="RHEA:29327"/>
        <dbReference type="ChEBI" id="CHEBI:15589"/>
        <dbReference type="ChEBI" id="CHEBI:30031"/>
    </reaction>
    <physiologicalReaction direction="right-to-left" evidence="1">
        <dbReference type="Rhea" id="RHEA:29329"/>
    </physiologicalReaction>
</comment>
<comment type="catalytic activity">
    <reaction evidence="1">
        <text>L-aspartate(in) + succinate(out) = L-aspartate(out) + succinate(in)</text>
        <dbReference type="Rhea" id="RHEA:29343"/>
        <dbReference type="ChEBI" id="CHEBI:29991"/>
        <dbReference type="ChEBI" id="CHEBI:30031"/>
    </reaction>
    <physiologicalReaction direction="right-to-left" evidence="1">
        <dbReference type="Rhea" id="RHEA:29345"/>
    </physiologicalReaction>
</comment>
<comment type="subcellular location">
    <subcellularLocation>
        <location evidence="1">Cell inner membrane</location>
        <topology evidence="1">Multi-pass membrane protein</topology>
    </subcellularLocation>
</comment>
<comment type="similarity">
    <text evidence="2">Belongs to the DcuA/DcuB transporter (TC 2.A.13.1) family.</text>
</comment>
<reference key="1">
    <citation type="journal article" date="2002" name="Proc. Natl. Acad. Sci. U.S.A.">
        <title>Extensive mosaic structure revealed by the complete genome sequence of uropathogenic Escherichia coli.</title>
        <authorList>
            <person name="Welch R.A."/>
            <person name="Burland V."/>
            <person name="Plunkett G. III"/>
            <person name="Redford P."/>
            <person name="Roesch P."/>
            <person name="Rasko D."/>
            <person name="Buckles E.L."/>
            <person name="Liou S.-R."/>
            <person name="Boutin A."/>
            <person name="Hackett J."/>
            <person name="Stroud D."/>
            <person name="Mayhew G.F."/>
            <person name="Rose D.J."/>
            <person name="Zhou S."/>
            <person name="Schwartz D.C."/>
            <person name="Perna N.T."/>
            <person name="Mobley H.L.T."/>
            <person name="Donnenberg M.S."/>
            <person name="Blattner F.R."/>
        </authorList>
    </citation>
    <scope>NUCLEOTIDE SEQUENCE [LARGE SCALE GENOMIC DNA]</scope>
    <source>
        <strain>CFT073 / ATCC 700928 / UPEC</strain>
    </source>
</reference>
<accession>P0ABN6</accession>
<accession>P04539</accession>
<gene>
    <name type="primary">dcuA</name>
    <name type="ordered locus">c5220</name>
</gene>
<name>DCUA_ECOL6</name>
<proteinExistence type="inferred from homology"/>
<evidence type="ECO:0000250" key="1">
    <source>
        <dbReference type="UniProtKB" id="P0ABN5"/>
    </source>
</evidence>
<evidence type="ECO:0000305" key="2"/>
<dbReference type="EMBL" id="AE014075">
    <property type="protein sequence ID" value="AAN83642.1"/>
    <property type="molecule type" value="Genomic_DNA"/>
</dbReference>
<dbReference type="RefSeq" id="WP_000961959.1">
    <property type="nucleotide sequence ID" value="NZ_CP051263.1"/>
</dbReference>
<dbReference type="SMR" id="P0ABN6"/>
<dbReference type="STRING" id="199310.c5220"/>
<dbReference type="GeneID" id="93777686"/>
<dbReference type="KEGG" id="ecc:c5220"/>
<dbReference type="eggNOG" id="COG2704">
    <property type="taxonomic scope" value="Bacteria"/>
</dbReference>
<dbReference type="HOGENOM" id="CLU_036056_1_1_6"/>
<dbReference type="BioCyc" id="ECOL199310:C5220-MONOMER"/>
<dbReference type="Proteomes" id="UP000001410">
    <property type="component" value="Chromosome"/>
</dbReference>
<dbReference type="GO" id="GO:0005886">
    <property type="term" value="C:plasma membrane"/>
    <property type="evidence" value="ECO:0007669"/>
    <property type="project" value="UniProtKB-SubCell"/>
</dbReference>
<dbReference type="GO" id="GO:0015297">
    <property type="term" value="F:antiporter activity"/>
    <property type="evidence" value="ECO:0007669"/>
    <property type="project" value="UniProtKB-KW"/>
</dbReference>
<dbReference type="GO" id="GO:0015556">
    <property type="term" value="F:C4-dicarboxylate transmembrane transporter activity"/>
    <property type="evidence" value="ECO:0007669"/>
    <property type="project" value="InterPro"/>
</dbReference>
<dbReference type="InterPro" id="IPR004668">
    <property type="entry name" value="Anaer_Dcu_memb_transpt"/>
</dbReference>
<dbReference type="NCBIfam" id="TIGR00770">
    <property type="entry name" value="Dcu"/>
    <property type="match status" value="1"/>
</dbReference>
<dbReference type="NCBIfam" id="NF006927">
    <property type="entry name" value="PRK09412.1"/>
    <property type="match status" value="1"/>
</dbReference>
<dbReference type="NCBIfam" id="NF009136">
    <property type="entry name" value="PRK12489.1"/>
    <property type="match status" value="1"/>
</dbReference>
<dbReference type="PANTHER" id="PTHR36106">
    <property type="entry name" value="ANAEROBIC C4-DICARBOXYLATE TRANSPORTER DCUB"/>
    <property type="match status" value="1"/>
</dbReference>
<dbReference type="PANTHER" id="PTHR36106:SF2">
    <property type="entry name" value="C4-DICARBOXYLATE TRANSPORTER DCUA"/>
    <property type="match status" value="1"/>
</dbReference>
<dbReference type="Pfam" id="PF03605">
    <property type="entry name" value="DcuA_DcuB"/>
    <property type="match status" value="1"/>
</dbReference>
<dbReference type="PIRSF" id="PIRSF004539">
    <property type="entry name" value="C4-dicrbxl_trns"/>
    <property type="match status" value="1"/>
</dbReference>
<sequence length="433" mass="45751">MLVVELIIVLLAIFLGARLGGIGIGFAGGLGVLVLAAIGVKPGNIPFDVISIIMAVIAAISAMQVAGGLDYLVHQTEKLLRRNPKYITILAPIVTYFLTIFAGTGNISLATLPVIAEVAKEQGVKPCRPLSTAVVSAQIAITASPISAAVVYMSSVMEGHGISYLHLLSVVIPSTLLAVLVMSFLVTMLFNSKLSDDPIYRKRLEEGLVELRGEKQIEIKSGAKTSVWLFLLGVVGVVIYAIINSPSMGLVEKPLMNTTNAILIIMLSVATLTTVICKVDTDNILNSSTFKAGMSACICILGVAWLGDTFVSNNIDWIKDTAGEVIQGHPWLLAVIFFFASALLYSQAATAKALMPMALALNVSPLTAVASFAAVSGLFILPTYPTLVAAVQMDDTGTTRIGKFVFNHPFFIPGTLGVALAVCFGFVLGSFML</sequence>
<organism>
    <name type="scientific">Escherichia coli O6:H1 (strain CFT073 / ATCC 700928 / UPEC)</name>
    <dbReference type="NCBI Taxonomy" id="199310"/>
    <lineage>
        <taxon>Bacteria</taxon>
        <taxon>Pseudomonadati</taxon>
        <taxon>Pseudomonadota</taxon>
        <taxon>Gammaproteobacteria</taxon>
        <taxon>Enterobacterales</taxon>
        <taxon>Enterobacteriaceae</taxon>
        <taxon>Escherichia</taxon>
    </lineage>
</organism>
<feature type="chain" id="PRO_0000170349" description="C4-dicarboxylate transporter DcuA">
    <location>
        <begin position="1"/>
        <end position="433"/>
    </location>
</feature>
<feature type="transmembrane region" description="Helical" evidence="1">
    <location>
        <begin position="1"/>
        <end position="18"/>
    </location>
</feature>
<feature type="topological domain" description="Cytoplasmic" evidence="1">
    <location>
        <position position="19"/>
    </location>
</feature>
<feature type="transmembrane region" description="Helical" evidence="1">
    <location>
        <begin position="20"/>
        <end position="37"/>
    </location>
</feature>
<feature type="topological domain" description="Periplasmic" evidence="1">
    <location>
        <begin position="38"/>
        <end position="53"/>
    </location>
</feature>
<feature type="transmembrane region" description="Helical" evidence="1">
    <location>
        <begin position="54"/>
        <end position="71"/>
    </location>
</feature>
<feature type="topological domain" description="Cytoplasmic" evidence="1">
    <location>
        <begin position="72"/>
        <end position="85"/>
    </location>
</feature>
<feature type="transmembrane region" description="Helical" evidence="1">
    <location>
        <begin position="86"/>
        <end position="103"/>
    </location>
</feature>
<feature type="topological domain" description="Periplasmic" evidence="1">
    <location>
        <begin position="104"/>
        <end position="132"/>
    </location>
</feature>
<feature type="transmembrane region" description="Helical" evidence="1">
    <location>
        <begin position="133"/>
        <end position="147"/>
    </location>
</feature>
<feature type="topological domain" description="Cytoplasmic" evidence="1">
    <location>
        <begin position="148"/>
        <end position="228"/>
    </location>
</feature>
<feature type="transmembrane region" description="Helical" evidence="1">
    <location>
        <begin position="229"/>
        <end position="246"/>
    </location>
</feature>
<feature type="topological domain" description="Periplasmic" evidence="1">
    <location>
        <begin position="247"/>
        <end position="264"/>
    </location>
</feature>
<feature type="transmembrane region" description="Helical" evidence="1">
    <location>
        <begin position="265"/>
        <end position="282"/>
    </location>
</feature>
<feature type="topological domain" description="Cytoplasmic" evidence="1">
    <location>
        <begin position="283"/>
        <end position="292"/>
    </location>
</feature>
<feature type="transmembrane region" description="Helical" evidence="1">
    <location>
        <begin position="293"/>
        <end position="310"/>
    </location>
</feature>
<feature type="topological domain" description="Periplasmic" evidence="1">
    <location>
        <begin position="311"/>
        <end position="332"/>
    </location>
</feature>
<feature type="transmembrane region" description="Helical" evidence="1">
    <location>
        <begin position="333"/>
        <end position="350"/>
    </location>
</feature>
<feature type="topological domain" description="Cytoplasmic" evidence="1">
    <location>
        <begin position="351"/>
        <end position="355"/>
    </location>
</feature>
<feature type="transmembrane region" description="Helical" evidence="1">
    <location>
        <begin position="356"/>
        <end position="373"/>
    </location>
</feature>
<feature type="topological domain" description="Periplasmic" evidence="1">
    <location>
        <begin position="374"/>
        <end position="433"/>
    </location>
</feature>
<protein>
    <recommendedName>
        <fullName evidence="1">C4-dicarboxylate transporter DcuA</fullName>
    </recommendedName>
</protein>